<keyword id="KW-1003">Cell membrane</keyword>
<keyword id="KW-0407">Ion channel</keyword>
<keyword id="KW-0406">Ion transport</keyword>
<keyword id="KW-0472">Membrane</keyword>
<keyword id="KW-0597">Phosphoprotein</keyword>
<keyword id="KW-0630">Potassium</keyword>
<keyword id="KW-0633">Potassium transport</keyword>
<keyword id="KW-1185">Reference proteome</keyword>
<keyword id="KW-0812">Transmembrane</keyword>
<keyword id="KW-1133">Transmembrane helix</keyword>
<keyword id="KW-0813">Transport</keyword>
<keyword id="KW-0851">Voltage-gated channel</keyword>
<organism>
    <name type="scientific">Rattus norvegicus</name>
    <name type="common">Rat</name>
    <dbReference type="NCBI Taxonomy" id="10116"/>
    <lineage>
        <taxon>Eukaryota</taxon>
        <taxon>Metazoa</taxon>
        <taxon>Chordata</taxon>
        <taxon>Craniata</taxon>
        <taxon>Vertebrata</taxon>
        <taxon>Euteleostomi</taxon>
        <taxon>Mammalia</taxon>
        <taxon>Eutheria</taxon>
        <taxon>Euarchontoglires</taxon>
        <taxon>Glires</taxon>
        <taxon>Rodentia</taxon>
        <taxon>Myomorpha</taxon>
        <taxon>Muroidea</taxon>
        <taxon>Muridae</taxon>
        <taxon>Murinae</taxon>
        <taxon>Rattus</taxon>
    </lineage>
</organism>
<dbReference type="EMBL" id="X83581">
    <property type="protein sequence ID" value="CAA58564.1"/>
    <property type="molecule type" value="mRNA"/>
</dbReference>
<dbReference type="EMBL" id="AF249676">
    <property type="protein sequence ID" value="AAF74265.1"/>
    <property type="molecule type" value="Genomic_DNA"/>
</dbReference>
<dbReference type="SMR" id="P52191"/>
<dbReference type="FunCoup" id="P52191">
    <property type="interactions" value="11"/>
</dbReference>
<dbReference type="STRING" id="10116.ENSRNOP00000006238"/>
<dbReference type="iPTMnet" id="P52191"/>
<dbReference type="PhosphoSitePlus" id="P52191"/>
<dbReference type="PaxDb" id="10116-ENSRNOP00000006238"/>
<dbReference type="AGR" id="RGD:61824"/>
<dbReference type="RGD" id="61824">
    <property type="gene designation" value="Kcnj16"/>
</dbReference>
<dbReference type="eggNOG" id="KOG3827">
    <property type="taxonomic scope" value="Eukaryota"/>
</dbReference>
<dbReference type="InParanoid" id="P52191"/>
<dbReference type="PhylomeDB" id="P52191"/>
<dbReference type="Reactome" id="R-RNO-1296041">
    <property type="pathway name" value="Activation of G protein gated Potassium channels"/>
</dbReference>
<dbReference type="Reactome" id="R-RNO-1296067">
    <property type="pathway name" value="Potassium transport channels"/>
</dbReference>
<dbReference type="Reactome" id="R-RNO-997272">
    <property type="pathway name" value="Inhibition of voltage gated Ca2+ channels via Gbeta/gamma subunits"/>
</dbReference>
<dbReference type="PRO" id="PR:P52191"/>
<dbReference type="Proteomes" id="UP000002494">
    <property type="component" value="Unplaced"/>
</dbReference>
<dbReference type="GO" id="GO:0016323">
    <property type="term" value="C:basolateral plasma membrane"/>
    <property type="evidence" value="ECO:0000314"/>
    <property type="project" value="RGD"/>
</dbReference>
<dbReference type="GO" id="GO:0034702">
    <property type="term" value="C:monoatomic ion channel complex"/>
    <property type="evidence" value="ECO:0007669"/>
    <property type="project" value="UniProtKB-KW"/>
</dbReference>
<dbReference type="GO" id="GO:0005886">
    <property type="term" value="C:plasma membrane"/>
    <property type="evidence" value="ECO:0000266"/>
    <property type="project" value="RGD"/>
</dbReference>
<dbReference type="GO" id="GO:0005242">
    <property type="term" value="F:inward rectifier potassium channel activity"/>
    <property type="evidence" value="ECO:0000266"/>
    <property type="project" value="RGD"/>
</dbReference>
<dbReference type="GO" id="GO:1990573">
    <property type="term" value="P:potassium ion import across plasma membrane"/>
    <property type="evidence" value="ECO:0000318"/>
    <property type="project" value="GO_Central"/>
</dbReference>
<dbReference type="GO" id="GO:0071805">
    <property type="term" value="P:potassium ion transmembrane transport"/>
    <property type="evidence" value="ECO:0000266"/>
    <property type="project" value="RGD"/>
</dbReference>
<dbReference type="GO" id="GO:0006813">
    <property type="term" value="P:potassium ion transport"/>
    <property type="evidence" value="ECO:0000314"/>
    <property type="project" value="RGD"/>
</dbReference>
<dbReference type="GO" id="GO:0034765">
    <property type="term" value="P:regulation of monoatomic ion transmembrane transport"/>
    <property type="evidence" value="ECO:0000318"/>
    <property type="project" value="GO_Central"/>
</dbReference>
<dbReference type="GO" id="GO:0006885">
    <property type="term" value="P:regulation of pH"/>
    <property type="evidence" value="ECO:0000315"/>
    <property type="project" value="RGD"/>
</dbReference>
<dbReference type="GO" id="GO:0010037">
    <property type="term" value="P:response to carbon dioxide"/>
    <property type="evidence" value="ECO:0000315"/>
    <property type="project" value="RGD"/>
</dbReference>
<dbReference type="FunFam" id="1.10.287.70:FF:000063">
    <property type="entry name" value="ATP-sensitive inward rectifier potassium channel 14"/>
    <property type="match status" value="1"/>
</dbReference>
<dbReference type="FunFam" id="2.60.40.1400:FF:000003">
    <property type="entry name" value="Potassium voltage-gated channel subfamily J member 16"/>
    <property type="match status" value="1"/>
</dbReference>
<dbReference type="Gene3D" id="1.10.287.70">
    <property type="match status" value="1"/>
</dbReference>
<dbReference type="Gene3D" id="2.60.40.1400">
    <property type="entry name" value="G protein-activated inward rectifier potassium channel 1"/>
    <property type="match status" value="1"/>
</dbReference>
<dbReference type="InterPro" id="IPR014756">
    <property type="entry name" value="Ig_E-set"/>
</dbReference>
<dbReference type="InterPro" id="IPR041647">
    <property type="entry name" value="IRK_C"/>
</dbReference>
<dbReference type="InterPro" id="IPR016449">
    <property type="entry name" value="K_chnl_inward-rec_Kir"/>
</dbReference>
<dbReference type="InterPro" id="IPR008061">
    <property type="entry name" value="K_chnl_inward-rec_Kir5"/>
</dbReference>
<dbReference type="InterPro" id="IPR013518">
    <property type="entry name" value="K_chnl_inward-rec_Kir_cyto"/>
</dbReference>
<dbReference type="InterPro" id="IPR040445">
    <property type="entry name" value="Kir_TM"/>
</dbReference>
<dbReference type="PANTHER" id="PTHR11767">
    <property type="entry name" value="INWARD RECTIFIER POTASSIUM CHANNEL"/>
    <property type="match status" value="1"/>
</dbReference>
<dbReference type="PANTHER" id="PTHR11767:SF24">
    <property type="entry name" value="INWARD RECTIFIER POTASSIUM CHANNEL 16"/>
    <property type="match status" value="1"/>
</dbReference>
<dbReference type="Pfam" id="PF01007">
    <property type="entry name" value="IRK"/>
    <property type="match status" value="1"/>
</dbReference>
<dbReference type="Pfam" id="PF17655">
    <property type="entry name" value="IRK_C"/>
    <property type="match status" value="1"/>
</dbReference>
<dbReference type="PIRSF" id="PIRSF005465">
    <property type="entry name" value="GIRK_kir"/>
    <property type="match status" value="1"/>
</dbReference>
<dbReference type="PRINTS" id="PR01678">
    <property type="entry name" value="KIR5CHANNEL"/>
</dbReference>
<dbReference type="PRINTS" id="PR01320">
    <property type="entry name" value="KIRCHANNEL"/>
</dbReference>
<dbReference type="SUPFAM" id="SSF81296">
    <property type="entry name" value="E set domains"/>
    <property type="match status" value="1"/>
</dbReference>
<dbReference type="SUPFAM" id="SSF81324">
    <property type="entry name" value="Voltage-gated potassium channels"/>
    <property type="match status" value="1"/>
</dbReference>
<proteinExistence type="evidence at transcript level"/>
<feature type="chain" id="PRO_0000154977" description="Inward rectifier potassium channel 16">
    <location>
        <begin position="1"/>
        <end position="419"/>
    </location>
</feature>
<feature type="topological domain" description="Cytoplasmic" evidence="2">
    <location>
        <begin position="1"/>
        <end position="67"/>
    </location>
</feature>
<feature type="transmembrane region" description="Helical; Name=M1" evidence="2">
    <location>
        <begin position="68"/>
        <end position="94"/>
    </location>
</feature>
<feature type="topological domain" description="Extracellular" evidence="2">
    <location>
        <begin position="95"/>
        <end position="117"/>
    </location>
</feature>
<feature type="intramembrane region" description="Helical; Pore-forming; Name=H5" evidence="2">
    <location>
        <begin position="118"/>
        <end position="134"/>
    </location>
</feature>
<feature type="topological domain" description="Extracellular" evidence="2">
    <location>
        <begin position="135"/>
        <end position="143"/>
    </location>
</feature>
<feature type="transmembrane region" description="Helical; Name=M2" evidence="2">
    <location>
        <begin position="144"/>
        <end position="171"/>
    </location>
</feature>
<feature type="topological domain" description="Cytoplasmic" evidence="2">
    <location>
        <begin position="172"/>
        <end position="419"/>
    </location>
</feature>
<feature type="short sequence motif" description="Selectivity filter" evidence="2">
    <location>
        <begin position="131"/>
        <end position="136"/>
    </location>
</feature>
<feature type="site" description="Role in the control of polyamine-mediated channel gating and in the blocking by intracellular magnesium" evidence="1">
    <location>
        <position position="161"/>
    </location>
</feature>
<feature type="modified residue" description="Phosphoserine" evidence="4">
    <location>
        <position position="358"/>
    </location>
</feature>
<feature type="modified residue" description="Phosphoserine" evidence="4">
    <location>
        <position position="374"/>
    </location>
</feature>
<feature type="modified residue" description="Phosphoserine" evidence="4">
    <location>
        <position position="376"/>
    </location>
</feature>
<feature type="sequence conflict" description="In Ref. 1; CAA58564." evidence="8" ref="1">
    <original>RGSCTSDTNTRRRSFSAVAMVSSCENPEETSLSPQDECKEVPYQKALLTLNRISMESQM</original>
    <variation>PRILHLGHQHQEEILQRSCHGEQL</variation>
    <location>
        <begin position="361"/>
        <end position="419"/>
    </location>
</feature>
<reference key="1">
    <citation type="journal article" date="1994" name="Recept. Channels">
        <title>Cloning and expression of a family of inward rectifier potassium channels.</title>
        <authorList>
            <person name="Bond C.T."/>
            <person name="Pessia M."/>
            <person name="Xia X.-M."/>
            <person name="Lagrutta A."/>
            <person name="Kavanaugh M.P."/>
            <person name="Adelman J.P."/>
        </authorList>
    </citation>
    <scope>NUCLEOTIDE SEQUENCE [MRNA]</scope>
    <source>
        <strain>Sprague-Dawley</strain>
        <tissue>Brain</tissue>
    </source>
</reference>
<reference key="2">
    <citation type="journal article" date="2000" name="J. Biol. Chem.">
        <title>pH dependence of the inwardly rectifying potassium channel, Kir5.1, and localization in renal tubular epithelia.</title>
        <authorList>
            <person name="Tucker S.J."/>
            <person name="Imbrici P."/>
            <person name="Salvatore L."/>
            <person name="D'Adamo M.C."/>
            <person name="Pessia M."/>
        </authorList>
    </citation>
    <scope>NUCLEOTIDE SEQUENCE [GENOMIC DNA]</scope>
    <scope>TISSUE SPECIFICITY</scope>
</reference>
<reference key="3">
    <citation type="journal article" date="2007" name="Channels">
        <title>Control of pH and PIP2 gating in heteromeric Kir4.1/Kir5.1 channels by H-Bonding at the helix-bundle crossing.</title>
        <authorList>
            <person name="Rapedius M."/>
            <person name="Paynter J.J."/>
            <person name="Fowler P.W."/>
            <person name="Shang L."/>
            <person name="Sansom M.S."/>
            <person name="Tucker S.J."/>
            <person name="Baukrowitz T."/>
        </authorList>
    </citation>
    <scope>ACTIVITY REGULATION</scope>
</reference>
<reference key="4">
    <citation type="journal article" date="2010" name="J. Biol. Chem.">
        <title>Molecular mechanisms of EAST/SeSAME syndrome mutations in Kir4.1 (KCNJ10).</title>
        <authorList>
            <person name="Sala-Rabanal M."/>
            <person name="Kucheryavykh L.Y."/>
            <person name="Skatchkov S.N."/>
            <person name="Eaton M.J."/>
            <person name="Nichols C.G."/>
        </authorList>
    </citation>
    <scope>TRANSPORTER ACTIVITY</scope>
    <scope>ACTIVITY REGULATION</scope>
</reference>
<name>KCJ16_RAT</name>
<evidence type="ECO:0000250" key="1"/>
<evidence type="ECO:0000250" key="2">
    <source>
        <dbReference type="UniProtKB" id="F1NHE9"/>
    </source>
</evidence>
<evidence type="ECO:0000250" key="3">
    <source>
        <dbReference type="UniProtKB" id="Q9NPI9"/>
    </source>
</evidence>
<evidence type="ECO:0000250" key="4">
    <source>
        <dbReference type="UniProtKB" id="Q9Z307"/>
    </source>
</evidence>
<evidence type="ECO:0000269" key="5">
    <source>
    </source>
</evidence>
<evidence type="ECO:0000269" key="6">
    <source>
    </source>
</evidence>
<evidence type="ECO:0000269" key="7">
    <source>
    </source>
</evidence>
<evidence type="ECO:0000305" key="8"/>
<protein>
    <recommendedName>
        <fullName>Inward rectifier potassium channel 16</fullName>
    </recommendedName>
    <alternativeName>
        <fullName>BIR9</fullName>
    </alternativeName>
    <alternativeName>
        <fullName>Inward rectifier K(+) channel Kir5.1</fullName>
    </alternativeName>
    <alternativeName>
        <fullName>Potassium channel, inwardly rectifying subfamily J member 16</fullName>
    </alternativeName>
</protein>
<comment type="function">
    <text evidence="1 3">Inward rectifier potassium channels are characterized by a greater tendency to allow potassium to flow into the cell rather than out of it. Their voltage dependence is regulated by the concentration of extracellular potassium; as external potassium is raised, the voltage range of the channel opening shifts to more positive voltages. The inward rectification is mainly due to the blockage of outward current by internal magnesium. KCNJ16 may be involved in the regulation of fluid and pH balance (By similarity). In the kidney, together with KCNJ10, mediates basolateral K(+) recycling in distal tubules; this process is critical for Na(+) reabsorption at the tubules.</text>
</comment>
<comment type="catalytic activity">
    <reaction evidence="7">
        <text>K(+)(in) = K(+)(out)</text>
        <dbReference type="Rhea" id="RHEA:29463"/>
        <dbReference type="ChEBI" id="CHEBI:29103"/>
    </reaction>
</comment>
<comment type="activity regulation">
    <text evidence="6 7">Channel activity is strongly regulated by variations of cytosolic pH; channels are activated by alkaline and inhibited by acidic pH values (PubMed:20807765). Activated by phosphatidylinositol 4,5 biphosphate (PtdIns(4,5)P2) (PubMed:18690035).</text>
</comment>
<comment type="subunit">
    <text evidence="3 4">It forms heteromeric channels with Kir4.1/KCNJ10; this interaction is required for KCNJ16 localization to the basolateral membrane in kidney cells. As a heteromer with KCNJ10, may interact with MAGI1; this interaction may facilitate KCNJ10/KCNJ16 potassium channel expression at the basolateral membrane in kidney cells. May form heteromers with Kir2.1/KCNJ2 (By similarity). Can form heteromeric channels with Kir4.2/KCNJ15 (By similarity).</text>
</comment>
<comment type="subcellular location">
    <subcellularLocation>
        <location evidence="3">Membrane</location>
        <topology evidence="3">Multi-pass membrane protein</topology>
    </subcellularLocation>
    <subcellularLocation>
        <location evidence="3">Basolateral cell membrane</location>
    </subcellularLocation>
    <text evidence="3">In kidney distal convoluted tubules, located in the basolateral membrane in the presence of KCNJ10.</text>
</comment>
<comment type="tissue specificity">
    <text evidence="5">Expressed in the brain, testis, liver, spleen, kidney, submaxillary gland and adrenals. In the kidney, expressed in the epithelial cells of both proximal and distal convoluted tubules, in the endothelial cells surrounding glomerular capillaries and in the flattened parietal layer of Bowman's capsule.</text>
</comment>
<comment type="similarity">
    <text evidence="8">Belongs to the inward rectifier-type potassium channel (TC 1.A.2.1) family. KCNJ16 subfamily.</text>
</comment>
<gene>
    <name type="primary">Kcnj16</name>
</gene>
<sequence>MSYYGSSYRIVNVDSKYPGYPPEHAIAEKRRARRRLLHKDGSCNVYFKHIFGEWGSYMVDIFTTLVDTKWRHMFVVFSLSYILSWLIFGSIFWLIALHHGDLLSDPDITPCVDNVHSFTAAFLFSLETQTTIGYGYRCVTEECSVAVLTVILQSILSCIINTFIIGAALAKMATARKRAQTIRFSYFALIGMRDGKLCLMWRIGDFRPNHVVEGTVRAQLLRYSEDSEGRMTMAFKDLKLVNDQIILVTPVTIVHEIDHESPLYALDRKAVAKDNFEILVTFIYTGDSTGTSHQSRSSYVPREILWGHRFHDVLEVKRKYYKVNCLQFEGSVEVYAPFCSAKQLDWKDQQLNNLEKTSPARGSCTSDTNTRRRSFSAVAMVSSCENPEETSLSPQDECKEVPYQKALLTLNRISMESQM</sequence>
<accession>P52191</accession>
<accession>Q9JI87</accession>